<comment type="similarity">
    <text evidence="1">Belongs to the UPF0270 family.</text>
</comment>
<proteinExistence type="inferred from homology"/>
<gene>
    <name type="ordered locus">SG2298</name>
</gene>
<dbReference type="EMBL" id="AP008232">
    <property type="protein sequence ID" value="BAE75573.1"/>
    <property type="molecule type" value="Genomic_DNA"/>
</dbReference>
<dbReference type="RefSeq" id="WP_011412106.1">
    <property type="nucleotide sequence ID" value="NC_007712.1"/>
</dbReference>
<dbReference type="SMR" id="Q2NQK2"/>
<dbReference type="STRING" id="343509.SG2298"/>
<dbReference type="KEGG" id="sgl:SG2298"/>
<dbReference type="eggNOG" id="COG3089">
    <property type="taxonomic scope" value="Bacteria"/>
</dbReference>
<dbReference type="HOGENOM" id="CLU_186759_1_0_6"/>
<dbReference type="OrthoDB" id="6120729at2"/>
<dbReference type="BioCyc" id="SGLO343509:SGP1_RS20950-MONOMER"/>
<dbReference type="Proteomes" id="UP000001932">
    <property type="component" value="Chromosome"/>
</dbReference>
<dbReference type="Gene3D" id="1.10.10.610">
    <property type="entry name" value="YehU-like"/>
    <property type="match status" value="1"/>
</dbReference>
<dbReference type="HAMAP" id="MF_00690">
    <property type="entry name" value="UPF0270"/>
    <property type="match status" value="1"/>
</dbReference>
<dbReference type="InterPro" id="IPR010648">
    <property type="entry name" value="UPF0270"/>
</dbReference>
<dbReference type="InterPro" id="IPR036685">
    <property type="entry name" value="YehU-like_sf"/>
</dbReference>
<dbReference type="NCBIfam" id="NF003438">
    <property type="entry name" value="PRK04966.1"/>
    <property type="match status" value="1"/>
</dbReference>
<dbReference type="Pfam" id="PF06794">
    <property type="entry name" value="UPF0270"/>
    <property type="match status" value="1"/>
</dbReference>
<dbReference type="PIRSF" id="PIRSF006169">
    <property type="entry name" value="UCP006169"/>
    <property type="match status" value="1"/>
</dbReference>
<dbReference type="SUPFAM" id="SSF118001">
    <property type="entry name" value="YehU-like"/>
    <property type="match status" value="1"/>
</dbReference>
<organism>
    <name type="scientific">Sodalis glossinidius (strain morsitans)</name>
    <dbReference type="NCBI Taxonomy" id="343509"/>
    <lineage>
        <taxon>Bacteria</taxon>
        <taxon>Pseudomonadati</taxon>
        <taxon>Pseudomonadota</taxon>
        <taxon>Gammaproteobacteria</taxon>
        <taxon>Enterobacterales</taxon>
        <taxon>Bruguierivoracaceae</taxon>
        <taxon>Sodalis</taxon>
    </lineage>
</organism>
<sequence>MIIPWQQIDPTTLYNLIESFVLREGTDYGLQEKSLQQKVADVLRQVQSGEAVLVWSELHESINIMPRGQYRPY</sequence>
<name>Y2298_SODGM</name>
<evidence type="ECO:0000255" key="1">
    <source>
        <dbReference type="HAMAP-Rule" id="MF_00690"/>
    </source>
</evidence>
<accession>Q2NQK2</accession>
<feature type="chain" id="PRO_1000045178" description="UPF0270 protein SG2298">
    <location>
        <begin position="1"/>
        <end position="73"/>
    </location>
</feature>
<reference key="1">
    <citation type="journal article" date="2006" name="Genome Res.">
        <title>Massive genome erosion and functional adaptations provide insights into the symbiotic lifestyle of Sodalis glossinidius in the tsetse host.</title>
        <authorList>
            <person name="Toh H."/>
            <person name="Weiss B.L."/>
            <person name="Perkin S.A.H."/>
            <person name="Yamashita A."/>
            <person name="Oshima K."/>
            <person name="Hattori M."/>
            <person name="Aksoy S."/>
        </authorList>
    </citation>
    <scope>NUCLEOTIDE SEQUENCE [LARGE SCALE GENOMIC DNA]</scope>
    <source>
        <strain>morsitans</strain>
    </source>
</reference>
<protein>
    <recommendedName>
        <fullName evidence="1">UPF0270 protein SG2298</fullName>
    </recommendedName>
</protein>